<comment type="function">
    <text evidence="1">Excises uracil residues from the DNA which can arise as a result of misincorporation of dUMP residues by DNA polymerase or due to deamination of cytosine.</text>
</comment>
<comment type="catalytic activity">
    <reaction evidence="1">
        <text>Hydrolyzes single-stranded DNA or mismatched double-stranded DNA and polynucleotides, releasing free uracil.</text>
        <dbReference type="EC" id="3.2.2.27"/>
    </reaction>
</comment>
<comment type="subcellular location">
    <subcellularLocation>
        <location evidence="1">Cytoplasm</location>
    </subcellularLocation>
</comment>
<comment type="similarity">
    <text evidence="1">Belongs to the uracil-DNA glycosylase (UDG) superfamily. UNG family.</text>
</comment>
<name>UNG_FRAT1</name>
<gene>
    <name evidence="1" type="primary">ung</name>
    <name type="ordered locus">FTF1578c</name>
</gene>
<evidence type="ECO:0000255" key="1">
    <source>
        <dbReference type="HAMAP-Rule" id="MF_00148"/>
    </source>
</evidence>
<organism>
    <name type="scientific">Francisella tularensis subsp. tularensis (strain FSC 198)</name>
    <dbReference type="NCBI Taxonomy" id="393115"/>
    <lineage>
        <taxon>Bacteria</taxon>
        <taxon>Pseudomonadati</taxon>
        <taxon>Pseudomonadota</taxon>
        <taxon>Gammaproteobacteria</taxon>
        <taxon>Thiotrichales</taxon>
        <taxon>Francisellaceae</taxon>
        <taxon>Francisella</taxon>
    </lineage>
</organism>
<keyword id="KW-0963">Cytoplasm</keyword>
<keyword id="KW-0227">DNA damage</keyword>
<keyword id="KW-0234">DNA repair</keyword>
<keyword id="KW-0378">Hydrolase</keyword>
<sequence>MTWSDILAEEKQKPYFKQILDFLACESAKGKVIFPTKENIFNAFKYTELDNLKVVILGQDPYHNYNQAHGLAFSVQKGVDIPPSLQNIYKELARSIPEFKTPNHGYLVDWAKQGVFLLNTTLTVEAHKANSHKDIGWETFTDTVINKISENKHNVVFMLWGSHARKKKVLIDSSRHLILESTHPSPLSAHRGFLGCNHFVDCNKYLIEKKDQKIDWNLLC</sequence>
<reference key="1">
    <citation type="journal article" date="2007" name="PLoS ONE">
        <title>Genome sequencing shows that European isolates of Francisella tularensis subspecies tularensis are almost identical to US laboratory strain Schu S4.</title>
        <authorList>
            <person name="Chaudhuri R.R."/>
            <person name="Ren C.-P."/>
            <person name="Desmond L."/>
            <person name="Vincent G.A."/>
            <person name="Silman N.J."/>
            <person name="Brehm J.K."/>
            <person name="Elmore M.J."/>
            <person name="Hudson M.J."/>
            <person name="Forsman M."/>
            <person name="Isherwood K.E."/>
            <person name="Gurycova D."/>
            <person name="Minton N.P."/>
            <person name="Titball R.W."/>
            <person name="Pallen M.J."/>
            <person name="Vipond R."/>
        </authorList>
    </citation>
    <scope>NUCLEOTIDE SEQUENCE [LARGE SCALE GENOMIC DNA]</scope>
    <source>
        <strain>FSC 198</strain>
    </source>
</reference>
<dbReference type="EC" id="3.2.2.27" evidence="1"/>
<dbReference type="EMBL" id="AM286280">
    <property type="protein sequence ID" value="CAL09594.1"/>
    <property type="molecule type" value="Genomic_DNA"/>
</dbReference>
<dbReference type="RefSeq" id="WP_003018069.1">
    <property type="nucleotide sequence ID" value="NC_008245.1"/>
</dbReference>
<dbReference type="SMR" id="Q14G45"/>
<dbReference type="KEGG" id="ftf:FTF1578c"/>
<dbReference type="HOGENOM" id="CLU_032162_3_1_6"/>
<dbReference type="GO" id="GO:0005737">
    <property type="term" value="C:cytoplasm"/>
    <property type="evidence" value="ECO:0007669"/>
    <property type="project" value="UniProtKB-SubCell"/>
</dbReference>
<dbReference type="GO" id="GO:0004844">
    <property type="term" value="F:uracil DNA N-glycosylase activity"/>
    <property type="evidence" value="ECO:0007669"/>
    <property type="project" value="UniProtKB-UniRule"/>
</dbReference>
<dbReference type="GO" id="GO:0097510">
    <property type="term" value="P:base-excision repair, AP site formation via deaminated base removal"/>
    <property type="evidence" value="ECO:0007669"/>
    <property type="project" value="TreeGrafter"/>
</dbReference>
<dbReference type="CDD" id="cd10027">
    <property type="entry name" value="UDG-F1-like"/>
    <property type="match status" value="1"/>
</dbReference>
<dbReference type="FunFam" id="3.40.470.10:FF:000001">
    <property type="entry name" value="Uracil-DNA glycosylase"/>
    <property type="match status" value="1"/>
</dbReference>
<dbReference type="Gene3D" id="3.40.470.10">
    <property type="entry name" value="Uracil-DNA glycosylase-like domain"/>
    <property type="match status" value="1"/>
</dbReference>
<dbReference type="HAMAP" id="MF_00148">
    <property type="entry name" value="UDG"/>
    <property type="match status" value="1"/>
</dbReference>
<dbReference type="InterPro" id="IPR002043">
    <property type="entry name" value="UDG_fam1"/>
</dbReference>
<dbReference type="InterPro" id="IPR018085">
    <property type="entry name" value="Ura-DNA_Glyclase_AS"/>
</dbReference>
<dbReference type="InterPro" id="IPR005122">
    <property type="entry name" value="Uracil-DNA_glycosylase-like"/>
</dbReference>
<dbReference type="InterPro" id="IPR036895">
    <property type="entry name" value="Uracil-DNA_glycosylase-like_sf"/>
</dbReference>
<dbReference type="NCBIfam" id="NF003588">
    <property type="entry name" value="PRK05254.1-1"/>
    <property type="match status" value="1"/>
</dbReference>
<dbReference type="NCBIfam" id="NF003589">
    <property type="entry name" value="PRK05254.1-2"/>
    <property type="match status" value="1"/>
</dbReference>
<dbReference type="NCBIfam" id="NF003591">
    <property type="entry name" value="PRK05254.1-4"/>
    <property type="match status" value="1"/>
</dbReference>
<dbReference type="NCBIfam" id="NF003592">
    <property type="entry name" value="PRK05254.1-5"/>
    <property type="match status" value="1"/>
</dbReference>
<dbReference type="NCBIfam" id="TIGR00628">
    <property type="entry name" value="ung"/>
    <property type="match status" value="1"/>
</dbReference>
<dbReference type="PANTHER" id="PTHR11264">
    <property type="entry name" value="URACIL-DNA GLYCOSYLASE"/>
    <property type="match status" value="1"/>
</dbReference>
<dbReference type="PANTHER" id="PTHR11264:SF0">
    <property type="entry name" value="URACIL-DNA GLYCOSYLASE"/>
    <property type="match status" value="1"/>
</dbReference>
<dbReference type="Pfam" id="PF03167">
    <property type="entry name" value="UDG"/>
    <property type="match status" value="1"/>
</dbReference>
<dbReference type="SMART" id="SM00986">
    <property type="entry name" value="UDG"/>
    <property type="match status" value="1"/>
</dbReference>
<dbReference type="SMART" id="SM00987">
    <property type="entry name" value="UreE_C"/>
    <property type="match status" value="1"/>
</dbReference>
<dbReference type="SUPFAM" id="SSF52141">
    <property type="entry name" value="Uracil-DNA glycosylase-like"/>
    <property type="match status" value="1"/>
</dbReference>
<dbReference type="PROSITE" id="PS00130">
    <property type="entry name" value="U_DNA_GLYCOSYLASE"/>
    <property type="match status" value="1"/>
</dbReference>
<protein>
    <recommendedName>
        <fullName evidence="1">Uracil-DNA glycosylase</fullName>
        <shortName evidence="1">UDG</shortName>
        <ecNumber evidence="1">3.2.2.27</ecNumber>
    </recommendedName>
</protein>
<proteinExistence type="inferred from homology"/>
<accession>Q14G45</accession>
<feature type="chain" id="PRO_1000009888" description="Uracil-DNA glycosylase">
    <location>
        <begin position="1"/>
        <end position="220"/>
    </location>
</feature>
<feature type="active site" description="Proton acceptor" evidence="1">
    <location>
        <position position="60"/>
    </location>
</feature>